<dbReference type="EC" id="6.5.1.4" evidence="1"/>
<dbReference type="EMBL" id="CP000493">
    <property type="protein sequence ID" value="ABM81382.1"/>
    <property type="molecule type" value="Genomic_DNA"/>
</dbReference>
<dbReference type="RefSeq" id="WP_011822700.1">
    <property type="nucleotide sequence ID" value="NC_008818.1"/>
</dbReference>
<dbReference type="SMR" id="A2BN21"/>
<dbReference type="STRING" id="415426.Hbut_1561"/>
<dbReference type="EnsemblBacteria" id="ABM81382">
    <property type="protein sequence ID" value="ABM81382"/>
    <property type="gene ID" value="Hbut_1561"/>
</dbReference>
<dbReference type="GeneID" id="4781412"/>
<dbReference type="KEGG" id="hbu:Hbut_1561"/>
<dbReference type="eggNOG" id="arCOG04125">
    <property type="taxonomic scope" value="Archaea"/>
</dbReference>
<dbReference type="HOGENOM" id="CLU_027882_0_0_2"/>
<dbReference type="OrthoDB" id="7994at2157"/>
<dbReference type="Proteomes" id="UP000002593">
    <property type="component" value="Chromosome"/>
</dbReference>
<dbReference type="GO" id="GO:0005737">
    <property type="term" value="C:cytoplasm"/>
    <property type="evidence" value="ECO:0007669"/>
    <property type="project" value="UniProtKB-SubCell"/>
</dbReference>
<dbReference type="GO" id="GO:0005524">
    <property type="term" value="F:ATP binding"/>
    <property type="evidence" value="ECO:0007669"/>
    <property type="project" value="UniProtKB-KW"/>
</dbReference>
<dbReference type="GO" id="GO:0003963">
    <property type="term" value="F:RNA-3'-phosphate cyclase activity"/>
    <property type="evidence" value="ECO:0007669"/>
    <property type="project" value="UniProtKB-UniRule"/>
</dbReference>
<dbReference type="GO" id="GO:0006396">
    <property type="term" value="P:RNA processing"/>
    <property type="evidence" value="ECO:0007669"/>
    <property type="project" value="InterPro"/>
</dbReference>
<dbReference type="CDD" id="cd00874">
    <property type="entry name" value="RNA_Cyclase_Class_II"/>
    <property type="match status" value="1"/>
</dbReference>
<dbReference type="FunFam" id="3.30.360.20:FF:000002">
    <property type="entry name" value="RNA terminal phosphate cyclase-like 1"/>
    <property type="match status" value="1"/>
</dbReference>
<dbReference type="Gene3D" id="3.65.10.20">
    <property type="entry name" value="RNA 3'-terminal phosphate cyclase domain"/>
    <property type="match status" value="1"/>
</dbReference>
<dbReference type="Gene3D" id="3.30.360.20">
    <property type="entry name" value="RNA 3'-terminal phosphate cyclase, insert domain"/>
    <property type="match status" value="1"/>
</dbReference>
<dbReference type="HAMAP" id="MF_00200">
    <property type="entry name" value="RTC"/>
    <property type="match status" value="1"/>
</dbReference>
<dbReference type="InterPro" id="IPR013791">
    <property type="entry name" value="RNA3'-term_phos_cycl_insert"/>
</dbReference>
<dbReference type="InterPro" id="IPR023797">
    <property type="entry name" value="RNA3'_phos_cyclase_dom"/>
</dbReference>
<dbReference type="InterPro" id="IPR037136">
    <property type="entry name" value="RNA3'_phos_cyclase_dom_sf"/>
</dbReference>
<dbReference type="InterPro" id="IPR000228">
    <property type="entry name" value="RNA3'_term_phos_cyc"/>
</dbReference>
<dbReference type="InterPro" id="IPR017770">
    <property type="entry name" value="RNA3'_term_phos_cyc_type_1"/>
</dbReference>
<dbReference type="InterPro" id="IPR020719">
    <property type="entry name" value="RNA3'_term_phos_cycl-like_CS"/>
</dbReference>
<dbReference type="InterPro" id="IPR013792">
    <property type="entry name" value="RNA3'P_cycl/enolpyr_Trfase_a/b"/>
</dbReference>
<dbReference type="InterPro" id="IPR036553">
    <property type="entry name" value="RPTC_insert"/>
</dbReference>
<dbReference type="NCBIfam" id="TIGR03399">
    <property type="entry name" value="RNA_3prim_cycl"/>
    <property type="match status" value="1"/>
</dbReference>
<dbReference type="PANTHER" id="PTHR11096">
    <property type="entry name" value="RNA 3' TERMINAL PHOSPHATE CYCLASE"/>
    <property type="match status" value="1"/>
</dbReference>
<dbReference type="PANTHER" id="PTHR11096:SF0">
    <property type="entry name" value="RNA 3'-TERMINAL PHOSPHATE CYCLASE"/>
    <property type="match status" value="1"/>
</dbReference>
<dbReference type="Pfam" id="PF01137">
    <property type="entry name" value="RTC"/>
    <property type="match status" value="1"/>
</dbReference>
<dbReference type="Pfam" id="PF05189">
    <property type="entry name" value="RTC_insert"/>
    <property type="match status" value="1"/>
</dbReference>
<dbReference type="PIRSF" id="PIRSF005378">
    <property type="entry name" value="RNA3'_term_phos_cycl_euk"/>
    <property type="match status" value="1"/>
</dbReference>
<dbReference type="SUPFAM" id="SSF55205">
    <property type="entry name" value="EPT/RTPC-like"/>
    <property type="match status" value="1"/>
</dbReference>
<dbReference type="PROSITE" id="PS01287">
    <property type="entry name" value="RTC"/>
    <property type="match status" value="1"/>
</dbReference>
<evidence type="ECO:0000255" key="1">
    <source>
        <dbReference type="HAMAP-Rule" id="MF_00200"/>
    </source>
</evidence>
<comment type="function">
    <text evidence="1">Catalyzes the conversion of 3'-phosphate to a 2',3'-cyclic phosphodiester at the end of RNA. The mechanism of action of the enzyme occurs in 3 steps: (A) adenylation of the enzyme by ATP; (B) transfer of adenylate to an RNA-N3'P to produce RNA-N3'PP5'A; (C) and attack of the adjacent 2'-hydroxyl on the 3'-phosphorus in the diester linkage to produce the cyclic end product. The biological role of this enzyme is unknown but it is likely to function in some aspects of cellular RNA processing.</text>
</comment>
<comment type="catalytic activity">
    <reaction evidence="1">
        <text>a 3'-end 3'-phospho-ribonucleotide-RNA + ATP = a 3'-end 2',3'-cyclophospho-ribonucleotide-RNA + AMP + diphosphate</text>
        <dbReference type="Rhea" id="RHEA:23976"/>
        <dbReference type="Rhea" id="RHEA-COMP:10463"/>
        <dbReference type="Rhea" id="RHEA-COMP:10464"/>
        <dbReference type="ChEBI" id="CHEBI:30616"/>
        <dbReference type="ChEBI" id="CHEBI:33019"/>
        <dbReference type="ChEBI" id="CHEBI:83062"/>
        <dbReference type="ChEBI" id="CHEBI:83064"/>
        <dbReference type="ChEBI" id="CHEBI:456215"/>
        <dbReference type="EC" id="6.5.1.4"/>
    </reaction>
</comment>
<comment type="subcellular location">
    <subcellularLocation>
        <location evidence="1">Cytoplasm</location>
    </subcellularLocation>
</comment>
<comment type="similarity">
    <text evidence="1">Belongs to the RNA 3'-terminal cyclase family. Type 1 subfamily.</text>
</comment>
<name>RTCA_HYPBU</name>
<protein>
    <recommendedName>
        <fullName evidence="1">RNA 3'-terminal phosphate cyclase</fullName>
        <shortName evidence="1">RNA cyclase</shortName>
        <shortName evidence="1">RNA-3'-phosphate cyclase</shortName>
        <ecNumber evidence="1">6.5.1.4</ecNumber>
    </recommendedName>
</protein>
<sequence>MIVIDGSIGEGGGQILRTTLALAALLGKPVRIVNIRAKRPRPGLQRQHLTSVKAVAELASARVEGLELGSTTLVFIPRGLRSGRFYFNIGTAGSITLVLQALLPVTAFAPGPVEVEIVGGTDVPWSPPIDYVRFVLRKLLAMFGFEFEIIVKRRGHYPRGGGRVVLRVTQPPHVLKPVKLEERGKVLRVEGLSHAVRLPRHVAERQARSAEAVLRSKLPGVPISIDLEWYEPSRDPHLGPGSGVVVWAVAEHSVLGSDSLGAKGKPAEAVGREAAEKLLEDLATGTALDRHASDMLIPYAALACGESILGGARLTMHAWTNIEVVKMLVPGAEMEFIEGGKLNEKFKLRVKGICYKPSS</sequence>
<organism>
    <name type="scientific">Hyperthermus butylicus (strain DSM 5456 / JCM 9403 / PLM1-5)</name>
    <dbReference type="NCBI Taxonomy" id="415426"/>
    <lineage>
        <taxon>Archaea</taxon>
        <taxon>Thermoproteota</taxon>
        <taxon>Thermoprotei</taxon>
        <taxon>Desulfurococcales</taxon>
        <taxon>Pyrodictiaceae</taxon>
        <taxon>Hyperthermus</taxon>
    </lineage>
</organism>
<feature type="chain" id="PRO_0000325189" description="RNA 3'-terminal phosphate cyclase">
    <location>
        <begin position="1"/>
        <end position="359"/>
    </location>
</feature>
<feature type="active site" description="Tele-AMP-histidine intermediate" evidence="1">
    <location>
        <position position="317"/>
    </location>
</feature>
<feature type="binding site" evidence="1">
    <location>
        <position position="100"/>
    </location>
    <ligand>
        <name>ATP</name>
        <dbReference type="ChEBI" id="CHEBI:30616"/>
    </ligand>
</feature>
<feature type="binding site" evidence="1">
    <location>
        <begin position="291"/>
        <end position="294"/>
    </location>
    <ligand>
        <name>ATP</name>
        <dbReference type="ChEBI" id="CHEBI:30616"/>
    </ligand>
</feature>
<reference key="1">
    <citation type="journal article" date="2007" name="Archaea">
        <title>The genome of Hyperthermus butylicus: a sulfur-reducing, peptide fermenting, neutrophilic Crenarchaeote growing up to 108 degrees C.</title>
        <authorList>
            <person name="Bruegger K."/>
            <person name="Chen L."/>
            <person name="Stark M."/>
            <person name="Zibat A."/>
            <person name="Redder P."/>
            <person name="Ruepp A."/>
            <person name="Awayez M."/>
            <person name="She Q."/>
            <person name="Garrett R.A."/>
            <person name="Klenk H.-P."/>
        </authorList>
    </citation>
    <scope>NUCLEOTIDE SEQUENCE [LARGE SCALE GENOMIC DNA]</scope>
    <source>
        <strain>DSM 5456 / JCM 9403 / PLM1-5</strain>
    </source>
</reference>
<keyword id="KW-0067">ATP-binding</keyword>
<keyword id="KW-0963">Cytoplasm</keyword>
<keyword id="KW-0436">Ligase</keyword>
<keyword id="KW-0547">Nucleotide-binding</keyword>
<keyword id="KW-1185">Reference proteome</keyword>
<gene>
    <name evidence="1" type="primary">rtcA</name>
    <name type="ordered locus">Hbut_1561</name>
</gene>
<accession>A2BN21</accession>
<proteinExistence type="inferred from homology"/>